<dbReference type="EMBL" id="AE014075">
    <property type="protein sequence ID" value="AAN81629.1"/>
    <property type="status" value="ALT_INIT"/>
    <property type="molecule type" value="Genomic_DNA"/>
</dbReference>
<dbReference type="RefSeq" id="WP_000066495.1">
    <property type="nucleotide sequence ID" value="NZ_CP051263.1"/>
</dbReference>
<dbReference type="SMR" id="P0A987"/>
<dbReference type="STRING" id="199310.c3177"/>
<dbReference type="GeneID" id="86859682"/>
<dbReference type="KEGG" id="ecc:c3177"/>
<dbReference type="eggNOG" id="COG1278">
    <property type="taxonomic scope" value="Bacteria"/>
</dbReference>
<dbReference type="HOGENOM" id="CLU_117621_2_1_6"/>
<dbReference type="Proteomes" id="UP000001410">
    <property type="component" value="Chromosome"/>
</dbReference>
<dbReference type="GO" id="GO:0005829">
    <property type="term" value="C:cytosol"/>
    <property type="evidence" value="ECO:0007669"/>
    <property type="project" value="UniProtKB-ARBA"/>
</dbReference>
<dbReference type="GO" id="GO:0003677">
    <property type="term" value="F:DNA binding"/>
    <property type="evidence" value="ECO:0007669"/>
    <property type="project" value="UniProtKB-KW"/>
</dbReference>
<dbReference type="CDD" id="cd04458">
    <property type="entry name" value="CSP_CDS"/>
    <property type="match status" value="1"/>
</dbReference>
<dbReference type="FunFam" id="2.40.50.140:FF:000006">
    <property type="entry name" value="Cold shock protein CspC"/>
    <property type="match status" value="1"/>
</dbReference>
<dbReference type="Gene3D" id="2.40.50.140">
    <property type="entry name" value="Nucleic acid-binding proteins"/>
    <property type="match status" value="1"/>
</dbReference>
<dbReference type="InterPro" id="IPR012156">
    <property type="entry name" value="Cold_shock_CspA"/>
</dbReference>
<dbReference type="InterPro" id="IPR050181">
    <property type="entry name" value="Cold_shock_domain"/>
</dbReference>
<dbReference type="InterPro" id="IPR011129">
    <property type="entry name" value="CSD"/>
</dbReference>
<dbReference type="InterPro" id="IPR019844">
    <property type="entry name" value="CSD_CS"/>
</dbReference>
<dbReference type="InterPro" id="IPR002059">
    <property type="entry name" value="CSP_DNA-bd"/>
</dbReference>
<dbReference type="InterPro" id="IPR012340">
    <property type="entry name" value="NA-bd_OB-fold"/>
</dbReference>
<dbReference type="PANTHER" id="PTHR11544">
    <property type="entry name" value="COLD SHOCK DOMAIN CONTAINING PROTEINS"/>
    <property type="match status" value="1"/>
</dbReference>
<dbReference type="Pfam" id="PF00313">
    <property type="entry name" value="CSD"/>
    <property type="match status" value="1"/>
</dbReference>
<dbReference type="PIRSF" id="PIRSF002599">
    <property type="entry name" value="Cold_shock_A"/>
    <property type="match status" value="1"/>
</dbReference>
<dbReference type="PRINTS" id="PR00050">
    <property type="entry name" value="COLDSHOCK"/>
</dbReference>
<dbReference type="SMART" id="SM00357">
    <property type="entry name" value="CSP"/>
    <property type="match status" value="1"/>
</dbReference>
<dbReference type="SUPFAM" id="SSF50249">
    <property type="entry name" value="Nucleic acid-binding proteins"/>
    <property type="match status" value="1"/>
</dbReference>
<dbReference type="PROSITE" id="PS00352">
    <property type="entry name" value="CSD_1"/>
    <property type="match status" value="1"/>
</dbReference>
<dbReference type="PROSITE" id="PS51857">
    <property type="entry name" value="CSD_2"/>
    <property type="match status" value="1"/>
</dbReference>
<sequence length="70" mass="7684">MSNKMTGLVKWFNPEKGFGFITPKDGSKDVFVHFSAIQSNDFKTLTENQEVEFGIENGPKGPAAVHVVAL</sequence>
<proteinExistence type="inferred from homology"/>
<evidence type="ECO:0000250" key="1"/>
<evidence type="ECO:0000305" key="2"/>
<organism>
    <name type="scientific">Escherichia coli O6:H1 (strain CFT073 / ATCC 700928 / UPEC)</name>
    <dbReference type="NCBI Taxonomy" id="199310"/>
    <lineage>
        <taxon>Bacteria</taxon>
        <taxon>Pseudomonadati</taxon>
        <taxon>Pseudomonadota</taxon>
        <taxon>Gammaproteobacteria</taxon>
        <taxon>Enterobacterales</taxon>
        <taxon>Enterobacteriaceae</taxon>
        <taxon>Escherichia</taxon>
    </lineage>
</organism>
<comment type="subcellular location">
    <subcellularLocation>
        <location evidence="1">Cytoplasm</location>
    </subcellularLocation>
</comment>
<comment type="sequence caution" evidence="2">
    <conflict type="erroneous initiation">
        <sequence resource="EMBL-CDS" id="AAN81629"/>
    </conflict>
</comment>
<reference key="1">
    <citation type="journal article" date="2002" name="Proc. Natl. Acad. Sci. U.S.A.">
        <title>Extensive mosaic structure revealed by the complete genome sequence of uropathogenic Escherichia coli.</title>
        <authorList>
            <person name="Welch R.A."/>
            <person name="Burland V."/>
            <person name="Plunkett G. III"/>
            <person name="Redford P."/>
            <person name="Roesch P."/>
            <person name="Rasko D."/>
            <person name="Buckles E.L."/>
            <person name="Liou S.-R."/>
            <person name="Boutin A."/>
            <person name="Hackett J."/>
            <person name="Stroud D."/>
            <person name="Mayhew G.F."/>
            <person name="Rose D.J."/>
            <person name="Zhou S."/>
            <person name="Schwartz D.C."/>
            <person name="Perna N.T."/>
            <person name="Mobley H.L.T."/>
            <person name="Donnenberg M.S."/>
            <person name="Blattner F.R."/>
        </authorList>
    </citation>
    <scope>NUCLEOTIDE SEQUENCE [LARGE SCALE GENOMIC DNA]</scope>
    <source>
        <strain>CFT073 / ATCC 700928 / UPEC</strain>
    </source>
</reference>
<name>CSPI_ECOL6</name>
<accession>P0A987</accession>
<accession>P77605</accession>
<keyword id="KW-0010">Activator</keyword>
<keyword id="KW-0963">Cytoplasm</keyword>
<keyword id="KW-0238">DNA-binding</keyword>
<keyword id="KW-1185">Reference proteome</keyword>
<keyword id="KW-0804">Transcription</keyword>
<keyword id="KW-0805">Transcription regulation</keyword>
<feature type="chain" id="PRO_0000100273" description="Cold shock-like protein CspI">
    <location>
        <begin position="1"/>
        <end position="70"/>
    </location>
</feature>
<feature type="domain" description="CSD">
    <location>
        <begin position="7"/>
        <end position="67"/>
    </location>
</feature>
<protein>
    <recommendedName>
        <fullName>Cold shock-like protein CspI</fullName>
        <shortName>CPS-I</shortName>
    </recommendedName>
</protein>
<gene>
    <name type="primary">cspI</name>
    <name type="ordered locus">c3177</name>
</gene>